<organism>
    <name type="scientific">Methanobrevibacter smithii (strain ATCC 35061 / DSM 861 / OCM 144 / PS)</name>
    <dbReference type="NCBI Taxonomy" id="420247"/>
    <lineage>
        <taxon>Archaea</taxon>
        <taxon>Methanobacteriati</taxon>
        <taxon>Methanobacteriota</taxon>
        <taxon>Methanomada group</taxon>
        <taxon>Methanobacteria</taxon>
        <taxon>Methanobacteriales</taxon>
        <taxon>Methanobacteriaceae</taxon>
        <taxon>Methanobrevibacter</taxon>
    </lineage>
</organism>
<sequence>MAHVAEWKKEEVNELKSLIDKYDVIGIVDLLNIPAKQLQEMRKSLHNKAVIRMSKKNLIDLALEDCNASKNNIVDLSEHMEGQVAVIATEMNPFKLYKILEDSKTSAPAKPGAIATDDIVIPEGDTGFEPGPFLGELQQVGIPAKIDKGKIVVSKETVLVEAGEEVSAAVASTLSRMDINPMEVGIDLRAVYEEEAIYTSEVLAIDEEQTLADVQNAFRNAFNLSVNAAIPTEETISTIITLAYTRAINVGVDAAIMTSETSEPIIGLAQAKMLALASEVSGTEGALDDELAEKLSNVAVAAAPVVEETVEEEEEEEEEEDAEEEAAAGLGALFG</sequence>
<gene>
    <name evidence="1" type="primary">rpl10</name>
    <name evidence="1" type="synonym">rplP0</name>
    <name type="ordered locus">Msm_0621</name>
</gene>
<protein>
    <recommendedName>
        <fullName evidence="1">Large ribosomal subunit protein uL10</fullName>
    </recommendedName>
    <alternativeName>
        <fullName evidence="3">50S ribosomal protein L10</fullName>
    </alternativeName>
    <alternativeName>
        <fullName evidence="1">Acidic ribosomal protein P0 homolog</fullName>
    </alternativeName>
</protein>
<comment type="function">
    <text evidence="1">Forms part of the ribosomal stalk, playing a central role in the interaction of the ribosome with GTP-bound translation factors.</text>
</comment>
<comment type="subunit">
    <text evidence="1">Part of the 50S ribosomal subunit. Forms part of the ribosomal stalk which helps the ribosome interact with GTP-bound translation factors. Forms a heptameric L10(L12)2(L12)2(L12)2 complex, where L10 forms an elongated spine to which the L12 dimers bind in a sequential fashion.</text>
</comment>
<comment type="similarity">
    <text evidence="1">Belongs to the universal ribosomal protein uL10 family.</text>
</comment>
<accession>A5UKU8</accession>
<reference key="1">
    <citation type="journal article" date="2007" name="Proc. Natl. Acad. Sci. U.S.A.">
        <title>Genomic and metabolic adaptations of Methanobrevibacter smithii to the human gut.</title>
        <authorList>
            <person name="Samuel B.S."/>
            <person name="Hansen E.E."/>
            <person name="Manchester J.K."/>
            <person name="Coutinho P.M."/>
            <person name="Henrissat B."/>
            <person name="Fulton R."/>
            <person name="Latreille P."/>
            <person name="Kim K."/>
            <person name="Wilson R.K."/>
            <person name="Gordon J.I."/>
        </authorList>
    </citation>
    <scope>NUCLEOTIDE SEQUENCE [LARGE SCALE GENOMIC DNA]</scope>
    <source>
        <strain>ATCC 35061 / DSM 861 / OCM 144 / PS</strain>
    </source>
</reference>
<evidence type="ECO:0000255" key="1">
    <source>
        <dbReference type="HAMAP-Rule" id="MF_00280"/>
    </source>
</evidence>
<evidence type="ECO:0000256" key="2">
    <source>
        <dbReference type="SAM" id="MobiDB-lite"/>
    </source>
</evidence>
<evidence type="ECO:0000305" key="3"/>
<dbReference type="EMBL" id="CP000678">
    <property type="protein sequence ID" value="ABQ86826.1"/>
    <property type="molecule type" value="Genomic_DNA"/>
</dbReference>
<dbReference type="RefSeq" id="WP_004036529.1">
    <property type="nucleotide sequence ID" value="NZ_CP117965.1"/>
</dbReference>
<dbReference type="SMR" id="A5UKU8"/>
<dbReference type="STRING" id="420247.Msm_0621"/>
<dbReference type="EnsemblBacteria" id="ABQ86826">
    <property type="protein sequence ID" value="ABQ86826"/>
    <property type="gene ID" value="Msm_0621"/>
</dbReference>
<dbReference type="KEGG" id="msi:Msm_0621"/>
<dbReference type="PATRIC" id="fig|420247.28.peg.618"/>
<dbReference type="eggNOG" id="arCOG04288">
    <property type="taxonomic scope" value="Archaea"/>
</dbReference>
<dbReference type="HOGENOM" id="CLU_053173_0_0_2"/>
<dbReference type="Proteomes" id="UP000001992">
    <property type="component" value="Chromosome"/>
</dbReference>
<dbReference type="GO" id="GO:0022625">
    <property type="term" value="C:cytosolic large ribosomal subunit"/>
    <property type="evidence" value="ECO:0007669"/>
    <property type="project" value="TreeGrafter"/>
</dbReference>
<dbReference type="GO" id="GO:0070180">
    <property type="term" value="F:large ribosomal subunit rRNA binding"/>
    <property type="evidence" value="ECO:0007669"/>
    <property type="project" value="UniProtKB-UniRule"/>
</dbReference>
<dbReference type="GO" id="GO:0003735">
    <property type="term" value="F:structural constituent of ribosome"/>
    <property type="evidence" value="ECO:0007669"/>
    <property type="project" value="TreeGrafter"/>
</dbReference>
<dbReference type="GO" id="GO:0002181">
    <property type="term" value="P:cytoplasmic translation"/>
    <property type="evidence" value="ECO:0007669"/>
    <property type="project" value="TreeGrafter"/>
</dbReference>
<dbReference type="GO" id="GO:0000027">
    <property type="term" value="P:ribosomal large subunit assembly"/>
    <property type="evidence" value="ECO:0007669"/>
    <property type="project" value="TreeGrafter"/>
</dbReference>
<dbReference type="CDD" id="cd05795">
    <property type="entry name" value="Ribosomal_P0_L10e"/>
    <property type="match status" value="1"/>
</dbReference>
<dbReference type="Gene3D" id="3.30.70.1730">
    <property type="match status" value="1"/>
</dbReference>
<dbReference type="Gene3D" id="3.90.105.20">
    <property type="match status" value="1"/>
</dbReference>
<dbReference type="Gene3D" id="6.10.140.760">
    <property type="match status" value="1"/>
</dbReference>
<dbReference type="HAMAP" id="MF_00280">
    <property type="entry name" value="Ribosomal_uL10_arch"/>
    <property type="match status" value="1"/>
</dbReference>
<dbReference type="InterPro" id="IPR050323">
    <property type="entry name" value="Ribosomal_protein_uL10"/>
</dbReference>
<dbReference type="InterPro" id="IPR001790">
    <property type="entry name" value="Ribosomal_uL10"/>
</dbReference>
<dbReference type="InterPro" id="IPR040637">
    <property type="entry name" value="Ribosomal_uL10-like_insert"/>
</dbReference>
<dbReference type="InterPro" id="IPR043164">
    <property type="entry name" value="Ribosomal_uL10-like_insert_sf"/>
</dbReference>
<dbReference type="InterPro" id="IPR043141">
    <property type="entry name" value="Ribosomal_uL10-like_sf"/>
</dbReference>
<dbReference type="InterPro" id="IPR022909">
    <property type="entry name" value="Ribosomal_uL10_arc"/>
</dbReference>
<dbReference type="NCBIfam" id="NF003098">
    <property type="entry name" value="PRK04019.1-5"/>
    <property type="match status" value="1"/>
</dbReference>
<dbReference type="PANTHER" id="PTHR45699">
    <property type="entry name" value="60S ACIDIC RIBOSOMAL PROTEIN P0"/>
    <property type="match status" value="1"/>
</dbReference>
<dbReference type="PANTHER" id="PTHR45699:SF3">
    <property type="entry name" value="LARGE RIBOSOMAL SUBUNIT PROTEIN UL10"/>
    <property type="match status" value="1"/>
</dbReference>
<dbReference type="Pfam" id="PF00466">
    <property type="entry name" value="Ribosomal_L10"/>
    <property type="match status" value="1"/>
</dbReference>
<dbReference type="Pfam" id="PF17777">
    <property type="entry name" value="RL10P_insert"/>
    <property type="match status" value="1"/>
</dbReference>
<dbReference type="SUPFAM" id="SSF160369">
    <property type="entry name" value="Ribosomal protein L10-like"/>
    <property type="match status" value="1"/>
</dbReference>
<proteinExistence type="inferred from homology"/>
<keyword id="KW-0687">Ribonucleoprotein</keyword>
<keyword id="KW-0689">Ribosomal protein</keyword>
<keyword id="KW-0694">RNA-binding</keyword>
<keyword id="KW-0699">rRNA-binding</keyword>
<name>RL10_METS3</name>
<feature type="chain" id="PRO_1000006791" description="Large ribosomal subunit protein uL10">
    <location>
        <begin position="1"/>
        <end position="335"/>
    </location>
</feature>
<feature type="region of interest" description="Disordered" evidence="2">
    <location>
        <begin position="306"/>
        <end position="335"/>
    </location>
</feature>
<feature type="compositionally biased region" description="Acidic residues" evidence="2">
    <location>
        <begin position="308"/>
        <end position="326"/>
    </location>
</feature>